<protein>
    <recommendedName>
        <fullName evidence="1">UPF0335 protein Rpal_4670</fullName>
    </recommendedName>
</protein>
<organism>
    <name type="scientific">Rhodopseudomonas palustris (strain TIE-1)</name>
    <dbReference type="NCBI Taxonomy" id="395960"/>
    <lineage>
        <taxon>Bacteria</taxon>
        <taxon>Pseudomonadati</taxon>
        <taxon>Pseudomonadota</taxon>
        <taxon>Alphaproteobacteria</taxon>
        <taxon>Hyphomicrobiales</taxon>
        <taxon>Nitrobacteraceae</taxon>
        <taxon>Rhodopseudomonas</taxon>
    </lineage>
</organism>
<proteinExistence type="inferred from homology"/>
<feature type="chain" id="PRO_1000198482" description="UPF0335 protein Rpal_4670">
    <location>
        <begin position="1"/>
        <end position="90"/>
    </location>
</feature>
<dbReference type="EMBL" id="CP001096">
    <property type="protein sequence ID" value="ACF03161.1"/>
    <property type="molecule type" value="Genomic_DNA"/>
</dbReference>
<dbReference type="RefSeq" id="WP_012497443.1">
    <property type="nucleotide sequence ID" value="NC_011004.1"/>
</dbReference>
<dbReference type="SMR" id="B3QKR4"/>
<dbReference type="KEGG" id="rpt:Rpal_4670"/>
<dbReference type="HOGENOM" id="CLU_158651_2_0_5"/>
<dbReference type="OrthoDB" id="9813793at2"/>
<dbReference type="Proteomes" id="UP000001725">
    <property type="component" value="Chromosome"/>
</dbReference>
<dbReference type="GO" id="GO:0003677">
    <property type="term" value="F:DNA binding"/>
    <property type="evidence" value="ECO:0007669"/>
    <property type="project" value="InterPro"/>
</dbReference>
<dbReference type="HAMAP" id="MF_00797">
    <property type="entry name" value="UPF0335"/>
    <property type="match status" value="1"/>
</dbReference>
<dbReference type="InterPro" id="IPR018753">
    <property type="entry name" value="GapR-like"/>
</dbReference>
<dbReference type="InterPro" id="IPR046367">
    <property type="entry name" value="GapR-like_DNA-bd"/>
</dbReference>
<dbReference type="NCBIfam" id="NF010247">
    <property type="entry name" value="PRK13694.1"/>
    <property type="match status" value="1"/>
</dbReference>
<dbReference type="Pfam" id="PF10073">
    <property type="entry name" value="GapR_DNA-bd"/>
    <property type="match status" value="1"/>
</dbReference>
<gene>
    <name type="ordered locus">Rpal_4670</name>
</gene>
<name>Y4670_RHOPT</name>
<comment type="similarity">
    <text evidence="1">Belongs to the UPF0335 family.</text>
</comment>
<reference key="1">
    <citation type="submission" date="2008-05" db="EMBL/GenBank/DDBJ databases">
        <title>Complete sequence of Rhodopseudomonas palustris TIE-1.</title>
        <authorList>
            <consortium name="US DOE Joint Genome Institute"/>
            <person name="Lucas S."/>
            <person name="Copeland A."/>
            <person name="Lapidus A."/>
            <person name="Glavina del Rio T."/>
            <person name="Dalin E."/>
            <person name="Tice H."/>
            <person name="Pitluck S."/>
            <person name="Chain P."/>
            <person name="Malfatti S."/>
            <person name="Shin M."/>
            <person name="Vergez L."/>
            <person name="Lang D."/>
            <person name="Schmutz J."/>
            <person name="Larimer F."/>
            <person name="Land M."/>
            <person name="Hauser L."/>
            <person name="Kyrpides N."/>
            <person name="Mikhailova N."/>
            <person name="Emerson D."/>
            <person name="Newman D.K."/>
            <person name="Roden E."/>
            <person name="Richardson P."/>
        </authorList>
    </citation>
    <scope>NUCLEOTIDE SEQUENCE [LARGE SCALE GENOMIC DNA]</scope>
    <source>
        <strain>TIE-1</strain>
    </source>
</reference>
<evidence type="ECO:0000255" key="1">
    <source>
        <dbReference type="HAMAP-Rule" id="MF_00797"/>
    </source>
</evidence>
<sequence>MATSAAAVQEDPATNFAKDQLRAIIERIERLEEEKKTISDDIRDVYAEAKGNGFDVKALRTIVRMRKQDANERAEQETILETYMQALGML</sequence>
<accession>B3QKR4</accession>